<name>MDCC_KLEPN</name>
<proteinExistence type="evidence at protein level"/>
<comment type="function">
    <text>Subunit of malonate decarboxylase, it is an acyl carrier protein to which acetyl and malonyl thioester residues are bound via a 2'-(5''-phosphoribosyl)-3'-dephospho-CoA prosthetic group and turn over during the catalytic mechanism.</text>
</comment>
<comment type="subcellular location">
    <subcellularLocation>
        <location evidence="1">Cytoplasm</location>
    </subcellularLocation>
</comment>
<comment type="PTM">
    <text>Covalently binds the prosthetic group of malonate decarboxylase.</text>
</comment>
<feature type="chain" id="PRO_0000220285" description="Malonate decarboxylase acyl carrier protein">
    <location>
        <begin position="1"/>
        <end position="99"/>
    </location>
</feature>
<feature type="modified residue" description="O-(phosphoribosyl dephospho-coenzyme A)serine" evidence="2">
    <location>
        <position position="25"/>
    </location>
</feature>
<protein>
    <recommendedName>
        <fullName>Malonate decarboxylase acyl carrier protein</fullName>
    </recommendedName>
    <alternativeName>
        <fullName>Malonate decarboxylase subunit delta</fullName>
    </alternativeName>
</protein>
<accession>O32712</accession>
<keyword id="KW-0963">Cytoplasm</keyword>
<keyword id="KW-0903">Direct protein sequencing</keyword>
<keyword id="KW-0597">Phosphoprotein</keyword>
<organism>
    <name type="scientific">Klebsiella pneumoniae</name>
    <dbReference type="NCBI Taxonomy" id="573"/>
    <lineage>
        <taxon>Bacteria</taxon>
        <taxon>Pseudomonadati</taxon>
        <taxon>Pseudomonadota</taxon>
        <taxon>Gammaproteobacteria</taxon>
        <taxon>Enterobacterales</taxon>
        <taxon>Enterobacteriaceae</taxon>
        <taxon>Klebsiella/Raoultella group</taxon>
        <taxon>Klebsiella</taxon>
        <taxon>Klebsiella pneumoniae complex</taxon>
    </lineage>
</organism>
<evidence type="ECO:0000250" key="1"/>
<evidence type="ECO:0000269" key="2">
    <source>
    </source>
</evidence>
<sequence length="99" mass="10537">MEQITLSFPASRALSGRALAGVVGSGDMEVLYTAAQSATLNVQITTSVDNSQARWQALFDRLNLINGLPAGQLIIHDFGATPGVARIRIEQVFEEAAHA</sequence>
<dbReference type="EMBL" id="U95087">
    <property type="protein sequence ID" value="AAC45455.1"/>
    <property type="molecule type" value="Genomic_DNA"/>
</dbReference>
<dbReference type="RefSeq" id="WP_004143106.1">
    <property type="nucleotide sequence ID" value="NZ_WYAM01000003.1"/>
</dbReference>
<dbReference type="SMR" id="O32712"/>
<dbReference type="BioCyc" id="MetaCyc:MONOMER-13754"/>
<dbReference type="GO" id="GO:0005737">
    <property type="term" value="C:cytoplasm"/>
    <property type="evidence" value="ECO:0007669"/>
    <property type="project" value="UniProtKB-SubCell"/>
</dbReference>
<dbReference type="GO" id="GO:0000036">
    <property type="term" value="F:acyl carrier activity"/>
    <property type="evidence" value="ECO:0007669"/>
    <property type="project" value="UniProtKB-UniRule"/>
</dbReference>
<dbReference type="HAMAP" id="MF_00710">
    <property type="entry name" value="Malonate_deCO2ase_dsu"/>
    <property type="match status" value="1"/>
</dbReference>
<dbReference type="InterPro" id="IPR023439">
    <property type="entry name" value="Mal_deCO2ase/Cit_lyase_ACP"/>
</dbReference>
<dbReference type="InterPro" id="IPR009662">
    <property type="entry name" value="Malonate_deCO2ase_dsu"/>
</dbReference>
<dbReference type="NCBIfam" id="TIGR03130">
    <property type="entry name" value="malonate_delta"/>
    <property type="match status" value="1"/>
</dbReference>
<dbReference type="Pfam" id="PF06857">
    <property type="entry name" value="ACP"/>
    <property type="match status" value="1"/>
</dbReference>
<gene>
    <name type="primary">mdcC</name>
</gene>
<reference key="1">
    <citation type="journal article" date="1997" name="Eur. J. Biochem.">
        <title>Sequence of a gene cluster from Klebsiella pneumoniae encoding malonate decarboxylase and expression of the enzyme in Escherichia coli.</title>
        <authorList>
            <person name="Hoenke S."/>
            <person name="Schmid M."/>
            <person name="Dimroth P."/>
        </authorList>
    </citation>
    <scope>NUCLEOTIDE SEQUENCE [GENOMIC DNA]</scope>
    <scope>PROTEIN SEQUENCE OF 1-10</scope>
</reference>
<reference key="2">
    <citation type="journal article" date="2000" name="Biochemistry">
        <title>Biosynthesis of triphosphoribosyl-dephospho-coenzyme A, the precursor of the prosthetic group of malonate decarboxylase.</title>
        <authorList>
            <person name="Hoenke S."/>
            <person name="Wild M.R."/>
            <person name="Dimroth P."/>
        </authorList>
    </citation>
    <scope>PROSTHETIC GROUP AT SER-25</scope>
</reference>